<organism>
    <name type="scientific">Vaccinia virus (strain L-IVP)</name>
    <name type="common">VACV</name>
    <dbReference type="NCBI Taxonomy" id="31531"/>
    <lineage>
        <taxon>Viruses</taxon>
        <taxon>Varidnaviria</taxon>
        <taxon>Bamfordvirae</taxon>
        <taxon>Nucleocytoviricota</taxon>
        <taxon>Pokkesviricetes</taxon>
        <taxon>Chitovirales</taxon>
        <taxon>Poxviridae</taxon>
        <taxon>Chordopoxvirinae</taxon>
        <taxon>Orthopoxvirus</taxon>
        <taxon>Vaccinia virus</taxon>
    </lineage>
</organism>
<sequence>MFNMNINSPVRFVKETNRAKSPTRQSPGAAGYDLYSAYDYTIPPGERQLIKTDISMSMPKICYGRIAPRSGLSLKGIDIGGGVIDEDYRGNIGVILINNGKCTFNVNTGDRIAQLIYQRIYYPELEEVQSLDSTNRGDQGFGSTGLR</sequence>
<evidence type="ECO:0000250" key="1"/>
<evidence type="ECO:0000250" key="2">
    <source>
        <dbReference type="UniProtKB" id="P17374"/>
    </source>
</evidence>
<evidence type="ECO:0000305" key="3"/>
<protein>
    <recommendedName>
        <fullName>Deoxyuridine 5'-triphosphate nucleotidohydrolase</fullName>
        <shortName>dUTPase</shortName>
        <ecNumber>3.6.1.23</ecNumber>
    </recommendedName>
    <alternativeName>
        <fullName>dUTP pyrophosphatase</fullName>
    </alternativeName>
</protein>
<gene>
    <name type="primary">OPG046</name>
    <name type="synonym">DUT</name>
    <name type="synonym">F16</name>
    <name type="synonym">F2L</name>
</gene>
<dbReference type="EC" id="3.6.1.23"/>
<dbReference type="EMBL" id="M57977">
    <property type="protein sequence ID" value="AAA48296.1"/>
    <property type="molecule type" value="Genomic_DNA"/>
</dbReference>
<dbReference type="PIR" id="G42506">
    <property type="entry name" value="PRVZ7F"/>
</dbReference>
<dbReference type="SMR" id="P68635"/>
<dbReference type="GO" id="GO:0004170">
    <property type="term" value="F:dUTP diphosphatase activity"/>
    <property type="evidence" value="ECO:0007669"/>
    <property type="project" value="UniProtKB-EC"/>
</dbReference>
<dbReference type="GO" id="GO:0000287">
    <property type="term" value="F:magnesium ion binding"/>
    <property type="evidence" value="ECO:0007669"/>
    <property type="project" value="InterPro"/>
</dbReference>
<dbReference type="GO" id="GO:0006226">
    <property type="term" value="P:dUMP biosynthetic process"/>
    <property type="evidence" value="ECO:0007669"/>
    <property type="project" value="InterPro"/>
</dbReference>
<dbReference type="GO" id="GO:0046081">
    <property type="term" value="P:dUTP catabolic process"/>
    <property type="evidence" value="ECO:0007669"/>
    <property type="project" value="InterPro"/>
</dbReference>
<dbReference type="CDD" id="cd07557">
    <property type="entry name" value="trimeric_dUTPase"/>
    <property type="match status" value="1"/>
</dbReference>
<dbReference type="Gene3D" id="2.70.40.10">
    <property type="match status" value="1"/>
</dbReference>
<dbReference type="InterPro" id="IPR008181">
    <property type="entry name" value="dUTPase"/>
</dbReference>
<dbReference type="InterPro" id="IPR029054">
    <property type="entry name" value="dUTPase-like"/>
</dbReference>
<dbReference type="InterPro" id="IPR036157">
    <property type="entry name" value="dUTPase-like_sf"/>
</dbReference>
<dbReference type="InterPro" id="IPR033704">
    <property type="entry name" value="dUTPase_trimeric"/>
</dbReference>
<dbReference type="NCBIfam" id="TIGR00576">
    <property type="entry name" value="dut"/>
    <property type="match status" value="1"/>
</dbReference>
<dbReference type="NCBIfam" id="NF001862">
    <property type="entry name" value="PRK00601.1"/>
    <property type="match status" value="1"/>
</dbReference>
<dbReference type="PANTHER" id="PTHR11241">
    <property type="entry name" value="DEOXYURIDINE 5'-TRIPHOSPHATE NUCLEOTIDOHYDROLASE"/>
    <property type="match status" value="1"/>
</dbReference>
<dbReference type="PANTHER" id="PTHR11241:SF0">
    <property type="entry name" value="DEOXYURIDINE 5'-TRIPHOSPHATE NUCLEOTIDOHYDROLASE"/>
    <property type="match status" value="1"/>
</dbReference>
<dbReference type="Pfam" id="PF00692">
    <property type="entry name" value="dUTPase"/>
    <property type="match status" value="1"/>
</dbReference>
<dbReference type="SUPFAM" id="SSF51283">
    <property type="entry name" value="dUTPase-like"/>
    <property type="match status" value="1"/>
</dbReference>
<proteinExistence type="inferred from homology"/>
<keyword id="KW-0244">Early protein</keyword>
<keyword id="KW-0378">Hydrolase</keyword>
<keyword id="KW-0460">Magnesium</keyword>
<keyword id="KW-0479">Metal-binding</keyword>
<keyword id="KW-0546">Nucleotide metabolism</keyword>
<feature type="chain" id="PRO_0000182941" description="Deoxyuridine 5'-triphosphate nucleotidohydrolase">
    <location>
        <begin position="1"/>
        <end position="147"/>
    </location>
</feature>
<feature type="binding site" evidence="2">
    <location>
        <position position="24"/>
    </location>
    <ligand>
        <name>Mg(2+)</name>
        <dbReference type="ChEBI" id="CHEBI:18420"/>
    </ligand>
</feature>
<feature type="binding site" evidence="2">
    <location>
        <begin position="68"/>
        <end position="70"/>
    </location>
    <ligand>
        <name>dUTP</name>
        <dbReference type="ChEBI" id="CHEBI:61555"/>
    </ligand>
</feature>
<feature type="binding site" evidence="2">
    <location>
        <begin position="82"/>
        <end position="85"/>
    </location>
    <ligand>
        <name>dUTP</name>
        <dbReference type="ChEBI" id="CHEBI:61555"/>
    </ligand>
</feature>
<feature type="binding site" evidence="2">
    <location>
        <position position="88"/>
    </location>
    <ligand>
        <name>dUTP</name>
        <dbReference type="ChEBI" id="CHEBI:61555"/>
    </ligand>
</feature>
<feature type="binding site" evidence="2">
    <location>
        <position position="93"/>
    </location>
    <ligand>
        <name>dUTP</name>
        <dbReference type="ChEBI" id="CHEBI:61555"/>
    </ligand>
</feature>
<feature type="binding site" evidence="2">
    <location>
        <position position="95"/>
    </location>
    <ligand>
        <name>dUTP</name>
        <dbReference type="ChEBI" id="CHEBI:61555"/>
    </ligand>
</feature>
<feature type="binding site" evidence="2">
    <location>
        <position position="111"/>
    </location>
    <ligand>
        <name>dUTP</name>
        <dbReference type="ChEBI" id="CHEBI:61555"/>
    </ligand>
</feature>
<organismHost>
    <name type="scientific">Homo sapiens</name>
    <name type="common">Human</name>
    <dbReference type="NCBI Taxonomy" id="9606"/>
</organismHost>
<comment type="function">
    <text evidence="2">This enzyme is involved in nucleotide metabolism: it produces dUMP, the immediate precursor of thymidine nucleotides and it decreases the intracellular concentration of dUTP so that uracil cannot be incorporated into DNA.</text>
</comment>
<comment type="catalytic activity">
    <reaction evidence="2">
        <text>dUTP + H2O = dUMP + diphosphate + H(+)</text>
        <dbReference type="Rhea" id="RHEA:10248"/>
        <dbReference type="ChEBI" id="CHEBI:15377"/>
        <dbReference type="ChEBI" id="CHEBI:15378"/>
        <dbReference type="ChEBI" id="CHEBI:33019"/>
        <dbReference type="ChEBI" id="CHEBI:61555"/>
        <dbReference type="ChEBI" id="CHEBI:246422"/>
        <dbReference type="EC" id="3.6.1.23"/>
    </reaction>
    <physiologicalReaction direction="left-to-right" evidence="2">
        <dbReference type="Rhea" id="RHEA:10249"/>
    </physiologicalReaction>
</comment>
<comment type="cofactor">
    <cofactor evidence="1">
        <name>Mg(2+)</name>
        <dbReference type="ChEBI" id="CHEBI:18420"/>
    </cofactor>
</comment>
<comment type="induction">
    <text evidence="2">Expressed in the early phase of the viral replicative cycle.</text>
</comment>
<comment type="similarity">
    <text evidence="3">Belongs to the dUTPase family.</text>
</comment>
<comment type="caution">
    <text evidence="3">Was originally thought to be a protease-like protein (pseudoprotease).</text>
</comment>
<accession>P68635</accession>
<accession>P21035</accession>
<name>DUT_VACCP</name>
<reference key="1">
    <citation type="journal article" date="1988" name="Biotekhnologiya">
        <title>Structural-functional organization of segment of vaccinia virus genome.</title>
        <authorList>
            <person name="Mikryukov N.N."/>
            <person name="Chizhikov V.E."/>
            <person name="Prikhod'Ko G.G."/>
            <person name="Urmmanov I.M."/>
            <person name="Serpinskii O.I."/>
            <person name="Blinov V.M."/>
            <person name="Nikulin A.E."/>
            <person name="Vasilenko S.K."/>
        </authorList>
    </citation>
    <scope>NUCLEOTIDE SEQUENCE [GENOMIC DNA]</scope>
</reference>